<keyword id="KW-0324">Glycolysis</keyword>
<keyword id="KW-0413">Isomerase</keyword>
<keyword id="KW-0464">Manganese</keyword>
<keyword id="KW-0479">Metal-binding</keyword>
<dbReference type="EC" id="5.4.2.12" evidence="1"/>
<dbReference type="EMBL" id="CP000627">
    <property type="protein sequence ID" value="ABQ21915.1"/>
    <property type="molecule type" value="Genomic_DNA"/>
</dbReference>
<dbReference type="EMBL" id="CP001235">
    <property type="protein sequence ID" value="ACP08402.1"/>
    <property type="molecule type" value="Genomic_DNA"/>
</dbReference>
<dbReference type="SMR" id="A5F3N4"/>
<dbReference type="KEGG" id="vco:VC0395_A2738"/>
<dbReference type="KEGG" id="vcr:VC395_0379"/>
<dbReference type="PATRIC" id="fig|345073.21.peg.367"/>
<dbReference type="eggNOG" id="COG0696">
    <property type="taxonomic scope" value="Bacteria"/>
</dbReference>
<dbReference type="HOGENOM" id="CLU_026099_2_0_6"/>
<dbReference type="OrthoDB" id="9800863at2"/>
<dbReference type="UniPathway" id="UPA00109">
    <property type="reaction ID" value="UER00186"/>
</dbReference>
<dbReference type="Proteomes" id="UP000000249">
    <property type="component" value="Chromosome 2"/>
</dbReference>
<dbReference type="GO" id="GO:0005829">
    <property type="term" value="C:cytosol"/>
    <property type="evidence" value="ECO:0007669"/>
    <property type="project" value="TreeGrafter"/>
</dbReference>
<dbReference type="GO" id="GO:0030145">
    <property type="term" value="F:manganese ion binding"/>
    <property type="evidence" value="ECO:0007669"/>
    <property type="project" value="UniProtKB-UniRule"/>
</dbReference>
<dbReference type="GO" id="GO:0004619">
    <property type="term" value="F:phosphoglycerate mutase activity"/>
    <property type="evidence" value="ECO:0007669"/>
    <property type="project" value="UniProtKB-EC"/>
</dbReference>
<dbReference type="GO" id="GO:0006007">
    <property type="term" value="P:glucose catabolic process"/>
    <property type="evidence" value="ECO:0007669"/>
    <property type="project" value="InterPro"/>
</dbReference>
<dbReference type="GO" id="GO:0006096">
    <property type="term" value="P:glycolytic process"/>
    <property type="evidence" value="ECO:0007669"/>
    <property type="project" value="UniProtKB-UniRule"/>
</dbReference>
<dbReference type="CDD" id="cd16010">
    <property type="entry name" value="iPGM"/>
    <property type="match status" value="1"/>
</dbReference>
<dbReference type="FunFam" id="3.40.1450.10:FF:000001">
    <property type="entry name" value="2,3-bisphosphoglycerate-independent phosphoglycerate mutase"/>
    <property type="match status" value="1"/>
</dbReference>
<dbReference type="FunFam" id="3.40.720.10:FF:000001">
    <property type="entry name" value="2,3-bisphosphoglycerate-independent phosphoglycerate mutase"/>
    <property type="match status" value="1"/>
</dbReference>
<dbReference type="Gene3D" id="3.40.720.10">
    <property type="entry name" value="Alkaline Phosphatase, subunit A"/>
    <property type="match status" value="1"/>
</dbReference>
<dbReference type="Gene3D" id="3.40.1450.10">
    <property type="entry name" value="BPG-independent phosphoglycerate mutase, domain B"/>
    <property type="match status" value="1"/>
</dbReference>
<dbReference type="HAMAP" id="MF_01038">
    <property type="entry name" value="GpmI"/>
    <property type="match status" value="1"/>
</dbReference>
<dbReference type="InterPro" id="IPR017850">
    <property type="entry name" value="Alkaline_phosphatase_core_sf"/>
</dbReference>
<dbReference type="InterPro" id="IPR011258">
    <property type="entry name" value="BPG-indep_PGM_N"/>
</dbReference>
<dbReference type="InterPro" id="IPR006124">
    <property type="entry name" value="Metalloenzyme"/>
</dbReference>
<dbReference type="InterPro" id="IPR036646">
    <property type="entry name" value="PGAM_B_sf"/>
</dbReference>
<dbReference type="InterPro" id="IPR005995">
    <property type="entry name" value="Pgm_bpd_ind"/>
</dbReference>
<dbReference type="NCBIfam" id="TIGR01307">
    <property type="entry name" value="pgm_bpd_ind"/>
    <property type="match status" value="1"/>
</dbReference>
<dbReference type="NCBIfam" id="NF003897">
    <property type="entry name" value="PRK05434.1-5"/>
    <property type="match status" value="1"/>
</dbReference>
<dbReference type="PANTHER" id="PTHR31637">
    <property type="entry name" value="2,3-BISPHOSPHOGLYCERATE-INDEPENDENT PHOSPHOGLYCERATE MUTASE"/>
    <property type="match status" value="1"/>
</dbReference>
<dbReference type="PANTHER" id="PTHR31637:SF0">
    <property type="entry name" value="2,3-BISPHOSPHOGLYCERATE-INDEPENDENT PHOSPHOGLYCERATE MUTASE"/>
    <property type="match status" value="1"/>
</dbReference>
<dbReference type="Pfam" id="PF06415">
    <property type="entry name" value="iPGM_N"/>
    <property type="match status" value="1"/>
</dbReference>
<dbReference type="Pfam" id="PF01676">
    <property type="entry name" value="Metalloenzyme"/>
    <property type="match status" value="1"/>
</dbReference>
<dbReference type="PIRSF" id="PIRSF001492">
    <property type="entry name" value="IPGAM"/>
    <property type="match status" value="1"/>
</dbReference>
<dbReference type="SUPFAM" id="SSF64158">
    <property type="entry name" value="2,3-Bisphosphoglycerate-independent phosphoglycerate mutase, substrate-binding domain"/>
    <property type="match status" value="1"/>
</dbReference>
<dbReference type="SUPFAM" id="SSF53649">
    <property type="entry name" value="Alkaline phosphatase-like"/>
    <property type="match status" value="1"/>
</dbReference>
<comment type="function">
    <text evidence="1">Catalyzes the interconversion of 2-phosphoglycerate and 3-phosphoglycerate.</text>
</comment>
<comment type="catalytic activity">
    <reaction evidence="1">
        <text>(2R)-2-phosphoglycerate = (2R)-3-phosphoglycerate</text>
        <dbReference type="Rhea" id="RHEA:15901"/>
        <dbReference type="ChEBI" id="CHEBI:58272"/>
        <dbReference type="ChEBI" id="CHEBI:58289"/>
        <dbReference type="EC" id="5.4.2.12"/>
    </reaction>
</comment>
<comment type="cofactor">
    <cofactor evidence="1">
        <name>Mn(2+)</name>
        <dbReference type="ChEBI" id="CHEBI:29035"/>
    </cofactor>
    <text evidence="1">Binds 2 manganese ions per subunit.</text>
</comment>
<comment type="pathway">
    <text evidence="1">Carbohydrate degradation; glycolysis; pyruvate from D-glyceraldehyde 3-phosphate: step 3/5.</text>
</comment>
<comment type="subunit">
    <text evidence="1">Monomer.</text>
</comment>
<comment type="similarity">
    <text evidence="1">Belongs to the BPG-independent phosphoglycerate mutase family.</text>
</comment>
<reference key="1">
    <citation type="submission" date="2007-03" db="EMBL/GenBank/DDBJ databases">
        <authorList>
            <person name="Heidelberg J."/>
        </authorList>
    </citation>
    <scope>NUCLEOTIDE SEQUENCE [LARGE SCALE GENOMIC DNA]</scope>
    <source>
        <strain>ATCC 39541 / Classical Ogawa 395 / O395</strain>
    </source>
</reference>
<reference key="2">
    <citation type="journal article" date="2008" name="PLoS ONE">
        <title>A recalibrated molecular clock and independent origins for the cholera pandemic clones.</title>
        <authorList>
            <person name="Feng L."/>
            <person name="Reeves P.R."/>
            <person name="Lan R."/>
            <person name="Ren Y."/>
            <person name="Gao C."/>
            <person name="Zhou Z."/>
            <person name="Ren Y."/>
            <person name="Cheng J."/>
            <person name="Wang W."/>
            <person name="Wang J."/>
            <person name="Qian W."/>
            <person name="Li D."/>
            <person name="Wang L."/>
        </authorList>
    </citation>
    <scope>NUCLEOTIDE SEQUENCE [LARGE SCALE GENOMIC DNA]</scope>
    <source>
        <strain>ATCC 39541 / Classical Ogawa 395 / O395</strain>
    </source>
</reference>
<protein>
    <recommendedName>
        <fullName evidence="1">2,3-bisphosphoglycerate-independent phosphoglycerate mutase</fullName>
        <shortName evidence="1">BPG-independent PGAM</shortName>
        <shortName evidence="1">Phosphoglyceromutase</shortName>
        <shortName evidence="1">iPGM</shortName>
        <ecNumber evidence="1">5.4.2.12</ecNumber>
    </recommendedName>
</protein>
<name>GPMI_VIBC3</name>
<feature type="chain" id="PRO_1000072983" description="2,3-bisphosphoglycerate-independent phosphoglycerate mutase">
    <location>
        <begin position="1"/>
        <end position="510"/>
    </location>
</feature>
<feature type="active site" description="Phosphoserine intermediate" evidence="1">
    <location>
        <position position="63"/>
    </location>
</feature>
<feature type="binding site" evidence="1">
    <location>
        <position position="13"/>
    </location>
    <ligand>
        <name>Mn(2+)</name>
        <dbReference type="ChEBI" id="CHEBI:29035"/>
        <label>2</label>
    </ligand>
</feature>
<feature type="binding site" evidence="1">
    <location>
        <position position="63"/>
    </location>
    <ligand>
        <name>Mn(2+)</name>
        <dbReference type="ChEBI" id="CHEBI:29035"/>
        <label>2</label>
    </ligand>
</feature>
<feature type="binding site" evidence="1">
    <location>
        <position position="124"/>
    </location>
    <ligand>
        <name>substrate</name>
    </ligand>
</feature>
<feature type="binding site" evidence="1">
    <location>
        <begin position="154"/>
        <end position="155"/>
    </location>
    <ligand>
        <name>substrate</name>
    </ligand>
</feature>
<feature type="binding site" evidence="1">
    <location>
        <position position="186"/>
    </location>
    <ligand>
        <name>substrate</name>
    </ligand>
</feature>
<feature type="binding site" evidence="1">
    <location>
        <position position="192"/>
    </location>
    <ligand>
        <name>substrate</name>
    </ligand>
</feature>
<feature type="binding site" evidence="1">
    <location>
        <begin position="262"/>
        <end position="265"/>
    </location>
    <ligand>
        <name>substrate</name>
    </ligand>
</feature>
<feature type="binding site" evidence="1">
    <location>
        <position position="334"/>
    </location>
    <ligand>
        <name>substrate</name>
    </ligand>
</feature>
<feature type="binding site" evidence="1">
    <location>
        <position position="401"/>
    </location>
    <ligand>
        <name>Mn(2+)</name>
        <dbReference type="ChEBI" id="CHEBI:29035"/>
        <label>1</label>
    </ligand>
</feature>
<feature type="binding site" evidence="1">
    <location>
        <position position="405"/>
    </location>
    <ligand>
        <name>Mn(2+)</name>
        <dbReference type="ChEBI" id="CHEBI:29035"/>
        <label>1</label>
    </ligand>
</feature>
<feature type="binding site" evidence="1">
    <location>
        <position position="442"/>
    </location>
    <ligand>
        <name>Mn(2+)</name>
        <dbReference type="ChEBI" id="CHEBI:29035"/>
        <label>2</label>
    </ligand>
</feature>
<feature type="binding site" evidence="1">
    <location>
        <position position="443"/>
    </location>
    <ligand>
        <name>Mn(2+)</name>
        <dbReference type="ChEBI" id="CHEBI:29035"/>
        <label>2</label>
    </ligand>
</feature>
<feature type="binding site" evidence="1">
    <location>
        <position position="461"/>
    </location>
    <ligand>
        <name>Mn(2+)</name>
        <dbReference type="ChEBI" id="CHEBI:29035"/>
        <label>1</label>
    </ligand>
</feature>
<organism>
    <name type="scientific">Vibrio cholerae serotype O1 (strain ATCC 39541 / Classical Ogawa 395 / O395)</name>
    <dbReference type="NCBI Taxonomy" id="345073"/>
    <lineage>
        <taxon>Bacteria</taxon>
        <taxon>Pseudomonadati</taxon>
        <taxon>Pseudomonadota</taxon>
        <taxon>Gammaproteobacteria</taxon>
        <taxon>Vibrionales</taxon>
        <taxon>Vibrionaceae</taxon>
        <taxon>Vibrio</taxon>
    </lineage>
</organism>
<sequence>MSAKKPMALVILDGWGYREDNANNAINNARTPVMDSLMANNPHTLISASGMDVGLPDGQMGNSEVGHTNIGAGRIVYQDLTRITKAIMDGEFQHNKVLVAAIDKAVAAGKAVHLMGLMSPGGVHSHEDHIYAAVEMAAARGAEKIYLHCFLDGRDTPPRSAEASLKRFQDLFAKLGKGRIASIVGRYYAMDRDNNWDRVEKAYDLLTLAQGEFTYDSAVEALQAAYAREENDEFVKATEIRAAGQESAAMQDGDALLFMNYRADRARQITRTFVPDFAGFSRKAFPALDFVMLTQYAADIPLQCAFGPASLENTYGEWLSKAGKTQLRISETEKYAHVTFFFNGGVENEFPGEERQLVASPKVATYDLQPEMSSKELTDKLVAAIKSGKYDAIICNYPNGDMVGHTGVYEAAVKACEAVDECIGRVVEAIKEVDGQLLITADHGNAEMMIDPETGGVHTAHTSLPVPLIYVGNKAISLKEGGKLSDLAPTMLALSDLDIPADMSGQVLYS</sequence>
<proteinExistence type="inferred from homology"/>
<gene>
    <name evidence="1" type="primary">gpmI</name>
    <name type="ordered locus">VC0395_A2738</name>
    <name type="ordered locus">VC395_0379</name>
</gene>
<evidence type="ECO:0000255" key="1">
    <source>
        <dbReference type="HAMAP-Rule" id="MF_01038"/>
    </source>
</evidence>
<accession>A5F3N4</accession>
<accession>C3M3Z4</accession>